<reference key="1">
    <citation type="journal article" date="2003" name="J. Bacteriol.">
        <title>Comparative analyses of the complete genome sequences of Pierce's disease and citrus variegated chlorosis strains of Xylella fastidiosa.</title>
        <authorList>
            <person name="Van Sluys M.A."/>
            <person name="de Oliveira M.C."/>
            <person name="Monteiro-Vitorello C.B."/>
            <person name="Miyaki C.Y."/>
            <person name="Furlan L.R."/>
            <person name="Camargo L.E.A."/>
            <person name="da Silva A.C.R."/>
            <person name="Moon D.H."/>
            <person name="Takita M.A."/>
            <person name="Lemos E.G.M."/>
            <person name="Machado M.A."/>
            <person name="Ferro M.I.T."/>
            <person name="da Silva F.R."/>
            <person name="Goldman M.H.S."/>
            <person name="Goldman G.H."/>
            <person name="Lemos M.V.F."/>
            <person name="El-Dorry H."/>
            <person name="Tsai S.M."/>
            <person name="Carrer H."/>
            <person name="Carraro D.M."/>
            <person name="de Oliveira R.C."/>
            <person name="Nunes L.R."/>
            <person name="Siqueira W.J."/>
            <person name="Coutinho L.L."/>
            <person name="Kimura E.T."/>
            <person name="Ferro E.S."/>
            <person name="Harakava R."/>
            <person name="Kuramae E.E."/>
            <person name="Marino C.L."/>
            <person name="Giglioti E."/>
            <person name="Abreu I.L."/>
            <person name="Alves L.M.C."/>
            <person name="do Amaral A.M."/>
            <person name="Baia G.S."/>
            <person name="Blanco S.R."/>
            <person name="Brito M.S."/>
            <person name="Cannavan F.S."/>
            <person name="Celestino A.V."/>
            <person name="da Cunha A.F."/>
            <person name="Fenille R.C."/>
            <person name="Ferro J.A."/>
            <person name="Formighieri E.F."/>
            <person name="Kishi L.T."/>
            <person name="Leoni S.G."/>
            <person name="Oliveira A.R."/>
            <person name="Rosa V.E. Jr."/>
            <person name="Sassaki F.T."/>
            <person name="Sena J.A.D."/>
            <person name="de Souza A.A."/>
            <person name="Truffi D."/>
            <person name="Tsukumo F."/>
            <person name="Yanai G.M."/>
            <person name="Zaros L.G."/>
            <person name="Civerolo E.L."/>
            <person name="Simpson A.J.G."/>
            <person name="Almeida N.F. Jr."/>
            <person name="Setubal J.C."/>
            <person name="Kitajima J.P."/>
        </authorList>
    </citation>
    <scope>NUCLEOTIDE SEQUENCE [LARGE SCALE GENOMIC DNA]</scope>
    <source>
        <strain>Temecula1 / ATCC 700964</strain>
    </source>
</reference>
<organism>
    <name type="scientific">Xylella fastidiosa (strain Temecula1 / ATCC 700964)</name>
    <dbReference type="NCBI Taxonomy" id="183190"/>
    <lineage>
        <taxon>Bacteria</taxon>
        <taxon>Pseudomonadati</taxon>
        <taxon>Pseudomonadota</taxon>
        <taxon>Gammaproteobacteria</taxon>
        <taxon>Lysobacterales</taxon>
        <taxon>Lysobacteraceae</taxon>
        <taxon>Xylella</taxon>
    </lineage>
</organism>
<comment type="function">
    <text evidence="1">Catalyzes the hydroxylation of 2-nonaprenyl-3-methyl-6-methoxy-1,4-benzoquinol during ubiquinone biosynthesis.</text>
</comment>
<comment type="catalytic activity">
    <reaction evidence="1">
        <text>a 5-methoxy-2-methyl-3-(all-trans-polyprenyl)benzene-1,4-diol + AH2 + O2 = a 3-demethylubiquinol + A + H2O</text>
        <dbReference type="Rhea" id="RHEA:50908"/>
        <dbReference type="Rhea" id="RHEA-COMP:10859"/>
        <dbReference type="Rhea" id="RHEA-COMP:10914"/>
        <dbReference type="ChEBI" id="CHEBI:13193"/>
        <dbReference type="ChEBI" id="CHEBI:15377"/>
        <dbReference type="ChEBI" id="CHEBI:15379"/>
        <dbReference type="ChEBI" id="CHEBI:17499"/>
        <dbReference type="ChEBI" id="CHEBI:84167"/>
        <dbReference type="ChEBI" id="CHEBI:84422"/>
        <dbReference type="EC" id="1.14.99.60"/>
    </reaction>
</comment>
<comment type="cofactor">
    <cofactor evidence="1">
        <name>Fe cation</name>
        <dbReference type="ChEBI" id="CHEBI:24875"/>
    </cofactor>
    <text evidence="1">Binds 2 iron ions per subunit.</text>
</comment>
<comment type="pathway">
    <text evidence="1">Cofactor biosynthesis; ubiquinone biosynthesis.</text>
</comment>
<comment type="subcellular location">
    <subcellularLocation>
        <location evidence="1">Cell membrane</location>
        <topology evidence="1">Peripheral membrane protein</topology>
    </subcellularLocation>
</comment>
<comment type="similarity">
    <text evidence="1">Belongs to the COQ7 family.</text>
</comment>
<comment type="sequence caution" evidence="2">
    <conflict type="erroneous initiation">
        <sequence resource="EMBL-CDS" id="AAO28622"/>
    </conflict>
</comment>
<evidence type="ECO:0000255" key="1">
    <source>
        <dbReference type="HAMAP-Rule" id="MF_01658"/>
    </source>
</evidence>
<evidence type="ECO:0000305" key="2"/>
<keyword id="KW-1003">Cell membrane</keyword>
<keyword id="KW-0408">Iron</keyword>
<keyword id="KW-0472">Membrane</keyword>
<keyword id="KW-0479">Metal-binding</keyword>
<keyword id="KW-0503">Monooxygenase</keyword>
<keyword id="KW-0560">Oxidoreductase</keyword>
<keyword id="KW-1185">Reference proteome</keyword>
<keyword id="KW-0831">Ubiquinone biosynthesis</keyword>
<accession>Q87DD2</accession>
<gene>
    <name evidence="1" type="primary">coq7</name>
    <name type="ordered locus">PD_0753</name>
</gene>
<protein>
    <recommendedName>
        <fullName evidence="1">3-demethoxyubiquinol 3-hydroxylase</fullName>
        <shortName evidence="1">DMQ hydroxylase</shortName>
        <ecNumber evidence="1">1.14.99.60</ecNumber>
    </recommendedName>
    <alternativeName>
        <fullName evidence="1">2-nonaprenyl-3-methyl-6-methoxy-1,4-benzoquinol hydroxylase</fullName>
    </alternativeName>
</protein>
<feature type="chain" id="PRO_0000338740" description="3-demethoxyubiquinol 3-hydroxylase">
    <location>
        <begin position="1"/>
        <end position="217"/>
    </location>
</feature>
<feature type="binding site" evidence="1">
    <location>
        <position position="66"/>
    </location>
    <ligand>
        <name>Fe cation</name>
        <dbReference type="ChEBI" id="CHEBI:24875"/>
        <label>1</label>
    </ligand>
</feature>
<feature type="binding site" evidence="1">
    <location>
        <position position="96"/>
    </location>
    <ligand>
        <name>Fe cation</name>
        <dbReference type="ChEBI" id="CHEBI:24875"/>
        <label>1</label>
    </ligand>
</feature>
<feature type="binding site" evidence="1">
    <location>
        <position position="96"/>
    </location>
    <ligand>
        <name>Fe cation</name>
        <dbReference type="ChEBI" id="CHEBI:24875"/>
        <label>2</label>
    </ligand>
</feature>
<feature type="binding site" evidence="1">
    <location>
        <position position="99"/>
    </location>
    <ligand>
        <name>Fe cation</name>
        <dbReference type="ChEBI" id="CHEBI:24875"/>
        <label>1</label>
    </ligand>
</feature>
<feature type="binding site" evidence="1">
    <location>
        <position position="148"/>
    </location>
    <ligand>
        <name>Fe cation</name>
        <dbReference type="ChEBI" id="CHEBI:24875"/>
        <label>2</label>
    </ligand>
</feature>
<feature type="binding site" evidence="1">
    <location>
        <position position="180"/>
    </location>
    <ligand>
        <name>Fe cation</name>
        <dbReference type="ChEBI" id="CHEBI:24875"/>
        <label>1</label>
    </ligand>
</feature>
<feature type="binding site" evidence="1">
    <location>
        <position position="180"/>
    </location>
    <ligand>
        <name>Fe cation</name>
        <dbReference type="ChEBI" id="CHEBI:24875"/>
        <label>2</label>
    </ligand>
</feature>
<feature type="binding site" evidence="1">
    <location>
        <position position="183"/>
    </location>
    <ligand>
        <name>Fe cation</name>
        <dbReference type="ChEBI" id="CHEBI:24875"/>
        <label>2</label>
    </ligand>
</feature>
<dbReference type="EC" id="1.14.99.60" evidence="1"/>
<dbReference type="EMBL" id="AE009442">
    <property type="protein sequence ID" value="AAO28622.1"/>
    <property type="status" value="ALT_INIT"/>
    <property type="molecule type" value="Genomic_DNA"/>
</dbReference>
<dbReference type="RefSeq" id="WP_011097769.1">
    <property type="nucleotide sequence ID" value="NC_004556.1"/>
</dbReference>
<dbReference type="SMR" id="Q87DD2"/>
<dbReference type="GeneID" id="93904532"/>
<dbReference type="KEGG" id="xft:PD_0753"/>
<dbReference type="HOGENOM" id="CLU_088601_0_0_6"/>
<dbReference type="UniPathway" id="UPA00232"/>
<dbReference type="Proteomes" id="UP000002516">
    <property type="component" value="Chromosome"/>
</dbReference>
<dbReference type="GO" id="GO:0005886">
    <property type="term" value="C:plasma membrane"/>
    <property type="evidence" value="ECO:0007669"/>
    <property type="project" value="UniProtKB-SubCell"/>
</dbReference>
<dbReference type="GO" id="GO:0008682">
    <property type="term" value="F:3-demethoxyubiquinol 3-hydroxylase activity"/>
    <property type="evidence" value="ECO:0007669"/>
    <property type="project" value="UniProtKB-EC"/>
</dbReference>
<dbReference type="GO" id="GO:0046872">
    <property type="term" value="F:metal ion binding"/>
    <property type="evidence" value="ECO:0007669"/>
    <property type="project" value="UniProtKB-KW"/>
</dbReference>
<dbReference type="GO" id="GO:0006744">
    <property type="term" value="P:ubiquinone biosynthetic process"/>
    <property type="evidence" value="ECO:0007669"/>
    <property type="project" value="UniProtKB-UniRule"/>
</dbReference>
<dbReference type="CDD" id="cd01042">
    <property type="entry name" value="DMQH"/>
    <property type="match status" value="1"/>
</dbReference>
<dbReference type="Gene3D" id="1.20.1260.10">
    <property type="match status" value="1"/>
</dbReference>
<dbReference type="HAMAP" id="MF_01658">
    <property type="entry name" value="COQ7"/>
    <property type="match status" value="1"/>
</dbReference>
<dbReference type="InterPro" id="IPR047809">
    <property type="entry name" value="COQ7_proteobact"/>
</dbReference>
<dbReference type="InterPro" id="IPR012347">
    <property type="entry name" value="Ferritin-like"/>
</dbReference>
<dbReference type="InterPro" id="IPR009078">
    <property type="entry name" value="Ferritin-like_SF"/>
</dbReference>
<dbReference type="InterPro" id="IPR011566">
    <property type="entry name" value="Ubq_synth_Coq7"/>
</dbReference>
<dbReference type="NCBIfam" id="NF033656">
    <property type="entry name" value="DMQ_monoox_COQ7"/>
    <property type="match status" value="1"/>
</dbReference>
<dbReference type="PANTHER" id="PTHR11237:SF4">
    <property type="entry name" value="5-DEMETHOXYUBIQUINONE HYDROXYLASE, MITOCHONDRIAL"/>
    <property type="match status" value="1"/>
</dbReference>
<dbReference type="PANTHER" id="PTHR11237">
    <property type="entry name" value="COENZYME Q10 BIOSYNTHESIS PROTEIN 7"/>
    <property type="match status" value="1"/>
</dbReference>
<dbReference type="Pfam" id="PF03232">
    <property type="entry name" value="COQ7"/>
    <property type="match status" value="1"/>
</dbReference>
<dbReference type="SUPFAM" id="SSF47240">
    <property type="entry name" value="Ferritin-like"/>
    <property type="match status" value="1"/>
</dbReference>
<sequence length="217" mass="24578">MDATLSTRRHSHLDSLLIETQRVFEVVFGHPVAQRPSPANAFPNLLLSPKDRRHAAGLMRINHVGEICAQGLYFGQVLVARKQELRRHLLKAAQEETDHLSWCSDRLYELESRPSLFNPFWYSGSYILGVFAGLLGDPWSLGFVVETERQVEAHLEKHLQVLPESDARSREILRVMKVEEARHADQADHAGARLLPSPITGAMAWAARLMKVVAYRI</sequence>
<name>COQ7_XYLFT</name>
<proteinExistence type="inferred from homology"/>